<gene>
    <name evidence="1" type="primary">pcm</name>
    <name type="ordered locus">PSHAa0688</name>
</gene>
<comment type="function">
    <text evidence="1">Catalyzes the methyl esterification of L-isoaspartyl residues in peptides and proteins that result from spontaneous decomposition of normal L-aspartyl and L-asparaginyl residues. It plays a role in the repair and/or degradation of damaged proteins.</text>
</comment>
<comment type="catalytic activity">
    <reaction evidence="1">
        <text>[protein]-L-isoaspartate + S-adenosyl-L-methionine = [protein]-L-isoaspartate alpha-methyl ester + S-adenosyl-L-homocysteine</text>
        <dbReference type="Rhea" id="RHEA:12705"/>
        <dbReference type="Rhea" id="RHEA-COMP:12143"/>
        <dbReference type="Rhea" id="RHEA-COMP:12144"/>
        <dbReference type="ChEBI" id="CHEBI:57856"/>
        <dbReference type="ChEBI" id="CHEBI:59789"/>
        <dbReference type="ChEBI" id="CHEBI:90596"/>
        <dbReference type="ChEBI" id="CHEBI:90598"/>
        <dbReference type="EC" id="2.1.1.77"/>
    </reaction>
</comment>
<comment type="subcellular location">
    <subcellularLocation>
        <location evidence="1">Cytoplasm</location>
    </subcellularLocation>
</comment>
<comment type="similarity">
    <text evidence="1">Belongs to the methyltransferase superfamily. L-isoaspartyl/D-aspartyl protein methyltransferase family.</text>
</comment>
<name>PIMT_PSET1</name>
<feature type="chain" id="PRO_1000093266" description="Protein-L-isoaspartate O-methyltransferase">
    <location>
        <begin position="1"/>
        <end position="212"/>
    </location>
</feature>
<feature type="active site" evidence="1">
    <location>
        <position position="62"/>
    </location>
</feature>
<protein>
    <recommendedName>
        <fullName evidence="1">Protein-L-isoaspartate O-methyltransferase</fullName>
        <ecNumber evidence="1">2.1.1.77</ecNumber>
    </recommendedName>
    <alternativeName>
        <fullName evidence="1">L-isoaspartyl protein carboxyl methyltransferase</fullName>
    </alternativeName>
    <alternativeName>
        <fullName evidence="1">Protein L-isoaspartyl methyltransferase</fullName>
    </alternativeName>
    <alternativeName>
        <fullName evidence="1">Protein-beta-aspartate methyltransferase</fullName>
        <shortName evidence="1">PIMT</shortName>
    </alternativeName>
</protein>
<evidence type="ECO:0000255" key="1">
    <source>
        <dbReference type="HAMAP-Rule" id="MF_00090"/>
    </source>
</evidence>
<reference key="1">
    <citation type="journal article" date="2005" name="Genome Res.">
        <title>Coping with cold: the genome of the versatile marine Antarctica bacterium Pseudoalteromonas haloplanktis TAC125.</title>
        <authorList>
            <person name="Medigue C."/>
            <person name="Krin E."/>
            <person name="Pascal G."/>
            <person name="Barbe V."/>
            <person name="Bernsel A."/>
            <person name="Bertin P.N."/>
            <person name="Cheung F."/>
            <person name="Cruveiller S."/>
            <person name="D'Amico S."/>
            <person name="Duilio A."/>
            <person name="Fang G."/>
            <person name="Feller G."/>
            <person name="Ho C."/>
            <person name="Mangenot S."/>
            <person name="Marino G."/>
            <person name="Nilsson J."/>
            <person name="Parrilli E."/>
            <person name="Rocha E.P.C."/>
            <person name="Rouy Z."/>
            <person name="Sekowska A."/>
            <person name="Tutino M.L."/>
            <person name="Vallenet D."/>
            <person name="von Heijne G."/>
            <person name="Danchin A."/>
        </authorList>
    </citation>
    <scope>NUCLEOTIDE SEQUENCE [LARGE SCALE GENOMIC DNA]</scope>
    <source>
        <strain>TAC 125</strain>
    </source>
</reference>
<organism>
    <name type="scientific">Pseudoalteromonas translucida (strain TAC 125)</name>
    <dbReference type="NCBI Taxonomy" id="326442"/>
    <lineage>
        <taxon>Bacteria</taxon>
        <taxon>Pseudomonadati</taxon>
        <taxon>Pseudomonadota</taxon>
        <taxon>Gammaproteobacteria</taxon>
        <taxon>Alteromonadales</taxon>
        <taxon>Pseudoalteromonadaceae</taxon>
        <taxon>Pseudoalteromonas</taxon>
    </lineage>
</organism>
<sequence length="212" mass="23292">MLANYTRSAKALSALLQREGVEDTQVLDAIAQIPRHIFVGDVLQHKAYQNTALPIGQGQTISQPYIVARMTELLQLAGVRDKVLEIGTGSGYQTAILAKIFTKVYSVERIKALQWQAKRRLHQLDLYNVAMKHGDGWQGWESQAPFNGIIVTAAAAKIPQDLLAQLADGGVLLAPIGEQEQKLTMVIRNGNNYTEHVIAPVRFVPLVAGDIE</sequence>
<accession>Q3IDD2</accession>
<proteinExistence type="inferred from homology"/>
<keyword id="KW-0963">Cytoplasm</keyword>
<keyword id="KW-0489">Methyltransferase</keyword>
<keyword id="KW-1185">Reference proteome</keyword>
<keyword id="KW-0949">S-adenosyl-L-methionine</keyword>
<keyword id="KW-0808">Transferase</keyword>
<dbReference type="EC" id="2.1.1.77" evidence="1"/>
<dbReference type="EMBL" id="CR954246">
    <property type="protein sequence ID" value="CAI85772.1"/>
    <property type="molecule type" value="Genomic_DNA"/>
</dbReference>
<dbReference type="SMR" id="Q3IDD2"/>
<dbReference type="STRING" id="326442.PSHAa0688"/>
<dbReference type="KEGG" id="pha:PSHAa0688"/>
<dbReference type="PATRIC" id="fig|326442.8.peg.651"/>
<dbReference type="eggNOG" id="COG2518">
    <property type="taxonomic scope" value="Bacteria"/>
</dbReference>
<dbReference type="HOGENOM" id="CLU_055432_2_0_6"/>
<dbReference type="BioCyc" id="PHAL326442:PSHA_RS03365-MONOMER"/>
<dbReference type="Proteomes" id="UP000006843">
    <property type="component" value="Chromosome I"/>
</dbReference>
<dbReference type="GO" id="GO:0005737">
    <property type="term" value="C:cytoplasm"/>
    <property type="evidence" value="ECO:0007669"/>
    <property type="project" value="UniProtKB-SubCell"/>
</dbReference>
<dbReference type="GO" id="GO:0004719">
    <property type="term" value="F:protein-L-isoaspartate (D-aspartate) O-methyltransferase activity"/>
    <property type="evidence" value="ECO:0007669"/>
    <property type="project" value="UniProtKB-UniRule"/>
</dbReference>
<dbReference type="GO" id="GO:0032259">
    <property type="term" value="P:methylation"/>
    <property type="evidence" value="ECO:0007669"/>
    <property type="project" value="UniProtKB-KW"/>
</dbReference>
<dbReference type="GO" id="GO:0036211">
    <property type="term" value="P:protein modification process"/>
    <property type="evidence" value="ECO:0007669"/>
    <property type="project" value="UniProtKB-UniRule"/>
</dbReference>
<dbReference type="GO" id="GO:0030091">
    <property type="term" value="P:protein repair"/>
    <property type="evidence" value="ECO:0007669"/>
    <property type="project" value="UniProtKB-UniRule"/>
</dbReference>
<dbReference type="CDD" id="cd02440">
    <property type="entry name" value="AdoMet_MTases"/>
    <property type="match status" value="1"/>
</dbReference>
<dbReference type="FunFam" id="3.40.50.150:FF:000010">
    <property type="entry name" value="Protein-L-isoaspartate O-methyltransferase"/>
    <property type="match status" value="1"/>
</dbReference>
<dbReference type="Gene3D" id="3.40.50.150">
    <property type="entry name" value="Vaccinia Virus protein VP39"/>
    <property type="match status" value="1"/>
</dbReference>
<dbReference type="HAMAP" id="MF_00090">
    <property type="entry name" value="PIMT"/>
    <property type="match status" value="1"/>
</dbReference>
<dbReference type="InterPro" id="IPR000682">
    <property type="entry name" value="PCMT"/>
</dbReference>
<dbReference type="InterPro" id="IPR029063">
    <property type="entry name" value="SAM-dependent_MTases_sf"/>
</dbReference>
<dbReference type="NCBIfam" id="TIGR00080">
    <property type="entry name" value="pimt"/>
    <property type="match status" value="1"/>
</dbReference>
<dbReference type="NCBIfam" id="NF001453">
    <property type="entry name" value="PRK00312.1"/>
    <property type="match status" value="1"/>
</dbReference>
<dbReference type="PANTHER" id="PTHR11579">
    <property type="entry name" value="PROTEIN-L-ISOASPARTATE O-METHYLTRANSFERASE"/>
    <property type="match status" value="1"/>
</dbReference>
<dbReference type="PANTHER" id="PTHR11579:SF0">
    <property type="entry name" value="PROTEIN-L-ISOASPARTATE(D-ASPARTATE) O-METHYLTRANSFERASE"/>
    <property type="match status" value="1"/>
</dbReference>
<dbReference type="Pfam" id="PF01135">
    <property type="entry name" value="PCMT"/>
    <property type="match status" value="1"/>
</dbReference>
<dbReference type="SUPFAM" id="SSF53335">
    <property type="entry name" value="S-adenosyl-L-methionine-dependent methyltransferases"/>
    <property type="match status" value="1"/>
</dbReference>
<dbReference type="PROSITE" id="PS01279">
    <property type="entry name" value="PCMT"/>
    <property type="match status" value="1"/>
</dbReference>